<sequence length="357" mass="37606">MSTRRDLPQSPYLAAVTGRKPSRVPVWFMRQAGRSLPEYRALRERYSMLAACFEPDVACEITLQPIRRYDVDAAILFSDIVVPLRAAGVDLDIVADVGPVIADPVRTAADVAAMKPLDPQAIQPVLVAASLLVAELGDVPLIGFAGAPFTLASYLVEGGPSRHHAHVKAMMLAEPASWHALMAKLTDLTIAFLVGQIDAGVDAIQVFDSWAGALSPIDYRQYVLPHSARVFAALGEHGVPMTHFGVGTAELLGAMSEAVTAGERPGRGAVVGVDWRTPLTDAAARVVPGTALQGNLDPAVVLAGWPAVERAARAVVDDGRRAVDAGAAGHIFNLGHGVLPESDPAVLADLVSLVHSL</sequence>
<reference key="1">
    <citation type="journal article" date="2008" name="PLoS ONE">
        <title>Genetic basis of virulence attenuation revealed by comparative genomic analysis of Mycobacterium tuberculosis strain H37Ra versus H37Rv.</title>
        <authorList>
            <person name="Zheng H."/>
            <person name="Lu L."/>
            <person name="Wang B."/>
            <person name="Pu S."/>
            <person name="Zhang X."/>
            <person name="Zhu G."/>
            <person name="Shi W."/>
            <person name="Zhang L."/>
            <person name="Wang H."/>
            <person name="Wang S."/>
            <person name="Zhao G."/>
            <person name="Zhang Y."/>
        </authorList>
    </citation>
    <scope>NUCLEOTIDE SEQUENCE [LARGE SCALE GENOMIC DNA]</scope>
    <source>
        <strain>ATCC 25177 / H37Ra</strain>
    </source>
</reference>
<protein>
    <recommendedName>
        <fullName evidence="1">Uroporphyrinogen decarboxylase</fullName>
        <shortName evidence="1">UPD</shortName>
        <shortName evidence="1">URO-D</shortName>
        <ecNumber evidence="1">4.1.1.37</ecNumber>
    </recommendedName>
</protein>
<dbReference type="EC" id="4.1.1.37" evidence="1"/>
<dbReference type="EMBL" id="CP000611">
    <property type="protein sequence ID" value="ABQ74480.1"/>
    <property type="molecule type" value="Genomic_DNA"/>
</dbReference>
<dbReference type="RefSeq" id="WP_003413873.1">
    <property type="nucleotide sequence ID" value="NZ_CP016972.1"/>
</dbReference>
<dbReference type="SMR" id="A5U630"/>
<dbReference type="GeneID" id="45426666"/>
<dbReference type="KEGG" id="mra:MRA_2706"/>
<dbReference type="eggNOG" id="COG0407">
    <property type="taxonomic scope" value="Bacteria"/>
</dbReference>
<dbReference type="HOGENOM" id="CLU_040933_0_1_11"/>
<dbReference type="UniPathway" id="UPA00251">
    <property type="reaction ID" value="UER00321"/>
</dbReference>
<dbReference type="Proteomes" id="UP000001988">
    <property type="component" value="Chromosome"/>
</dbReference>
<dbReference type="GO" id="GO:0005829">
    <property type="term" value="C:cytosol"/>
    <property type="evidence" value="ECO:0007669"/>
    <property type="project" value="TreeGrafter"/>
</dbReference>
<dbReference type="GO" id="GO:0004853">
    <property type="term" value="F:uroporphyrinogen decarboxylase activity"/>
    <property type="evidence" value="ECO:0007669"/>
    <property type="project" value="UniProtKB-UniRule"/>
</dbReference>
<dbReference type="GO" id="GO:0006782">
    <property type="term" value="P:protoporphyrinogen IX biosynthetic process"/>
    <property type="evidence" value="ECO:0007669"/>
    <property type="project" value="UniProtKB-UniRule"/>
</dbReference>
<dbReference type="CDD" id="cd00717">
    <property type="entry name" value="URO-D"/>
    <property type="match status" value="1"/>
</dbReference>
<dbReference type="FunFam" id="3.20.20.210:FF:000007">
    <property type="entry name" value="Uroporphyrinogen decarboxylase"/>
    <property type="match status" value="1"/>
</dbReference>
<dbReference type="Gene3D" id="3.20.20.210">
    <property type="match status" value="1"/>
</dbReference>
<dbReference type="HAMAP" id="MF_00218">
    <property type="entry name" value="URO_D"/>
    <property type="match status" value="1"/>
</dbReference>
<dbReference type="InterPro" id="IPR038071">
    <property type="entry name" value="UROD/MetE-like_sf"/>
</dbReference>
<dbReference type="InterPro" id="IPR006361">
    <property type="entry name" value="Uroporphyrinogen_deCO2ase_HemE"/>
</dbReference>
<dbReference type="InterPro" id="IPR000257">
    <property type="entry name" value="Uroporphyrinogen_deCOase"/>
</dbReference>
<dbReference type="NCBIfam" id="TIGR01464">
    <property type="entry name" value="hemE"/>
    <property type="match status" value="1"/>
</dbReference>
<dbReference type="PANTHER" id="PTHR21091">
    <property type="entry name" value="METHYLTETRAHYDROFOLATE:HOMOCYSTEINE METHYLTRANSFERASE RELATED"/>
    <property type="match status" value="1"/>
</dbReference>
<dbReference type="PANTHER" id="PTHR21091:SF169">
    <property type="entry name" value="UROPORPHYRINOGEN DECARBOXYLASE"/>
    <property type="match status" value="1"/>
</dbReference>
<dbReference type="Pfam" id="PF01208">
    <property type="entry name" value="URO-D"/>
    <property type="match status" value="1"/>
</dbReference>
<dbReference type="SUPFAM" id="SSF51726">
    <property type="entry name" value="UROD/MetE-like"/>
    <property type="match status" value="1"/>
</dbReference>
<dbReference type="PROSITE" id="PS00906">
    <property type="entry name" value="UROD_1"/>
    <property type="match status" value="1"/>
</dbReference>
<dbReference type="PROSITE" id="PS00907">
    <property type="entry name" value="UROD_2"/>
    <property type="match status" value="1"/>
</dbReference>
<gene>
    <name evidence="1" type="primary">hemE</name>
    <name type="ordered locus">MRA_2706</name>
</gene>
<comment type="function">
    <text evidence="1">Catalyzes the decarboxylation of four acetate groups of uroporphyrinogen-III to yield coproporphyrinogen-III.</text>
</comment>
<comment type="catalytic activity">
    <reaction evidence="1">
        <text>uroporphyrinogen III + 4 H(+) = coproporphyrinogen III + 4 CO2</text>
        <dbReference type="Rhea" id="RHEA:19865"/>
        <dbReference type="ChEBI" id="CHEBI:15378"/>
        <dbReference type="ChEBI" id="CHEBI:16526"/>
        <dbReference type="ChEBI" id="CHEBI:57308"/>
        <dbReference type="ChEBI" id="CHEBI:57309"/>
        <dbReference type="EC" id="4.1.1.37"/>
    </reaction>
</comment>
<comment type="pathway">
    <text evidence="1">Porphyrin-containing compound metabolism; protoporphyrin-IX biosynthesis; coproporphyrinogen-III from 5-aminolevulinate: step 4/4.</text>
</comment>
<comment type="subunit">
    <text evidence="1">Homodimer.</text>
</comment>
<comment type="subcellular location">
    <subcellularLocation>
        <location evidence="1">Cytoplasm</location>
    </subcellularLocation>
</comment>
<comment type="similarity">
    <text evidence="1">Belongs to the uroporphyrinogen decarboxylase family.</text>
</comment>
<accession>A5U630</accession>
<organism>
    <name type="scientific">Mycobacterium tuberculosis (strain ATCC 25177 / H37Ra)</name>
    <dbReference type="NCBI Taxonomy" id="419947"/>
    <lineage>
        <taxon>Bacteria</taxon>
        <taxon>Bacillati</taxon>
        <taxon>Actinomycetota</taxon>
        <taxon>Actinomycetes</taxon>
        <taxon>Mycobacteriales</taxon>
        <taxon>Mycobacteriaceae</taxon>
        <taxon>Mycobacterium</taxon>
        <taxon>Mycobacterium tuberculosis complex</taxon>
    </lineage>
</organism>
<evidence type="ECO:0000255" key="1">
    <source>
        <dbReference type="HAMAP-Rule" id="MF_00218"/>
    </source>
</evidence>
<proteinExistence type="inferred from homology"/>
<feature type="chain" id="PRO_1000023924" description="Uroporphyrinogen decarboxylase">
    <location>
        <begin position="1"/>
        <end position="357"/>
    </location>
</feature>
<feature type="binding site" evidence="1">
    <location>
        <begin position="30"/>
        <end position="34"/>
    </location>
    <ligand>
        <name>substrate</name>
    </ligand>
</feature>
<feature type="binding site" evidence="1">
    <location>
        <position position="79"/>
    </location>
    <ligand>
        <name>substrate</name>
    </ligand>
</feature>
<feature type="binding site" evidence="1">
    <location>
        <position position="154"/>
    </location>
    <ligand>
        <name>substrate</name>
    </ligand>
</feature>
<feature type="binding site" evidence="1">
    <location>
        <position position="209"/>
    </location>
    <ligand>
        <name>substrate</name>
    </ligand>
</feature>
<feature type="binding site" evidence="1">
    <location>
        <position position="336"/>
    </location>
    <ligand>
        <name>substrate</name>
    </ligand>
</feature>
<feature type="site" description="Transition state stabilizer" evidence="1">
    <location>
        <position position="79"/>
    </location>
</feature>
<name>DCUP_MYCTA</name>
<keyword id="KW-0963">Cytoplasm</keyword>
<keyword id="KW-0210">Decarboxylase</keyword>
<keyword id="KW-0456">Lyase</keyword>
<keyword id="KW-0627">Porphyrin biosynthesis</keyword>
<keyword id="KW-1185">Reference proteome</keyword>